<keyword id="KW-0067">ATP-binding</keyword>
<keyword id="KW-0963">Cytoplasm</keyword>
<keyword id="KW-0436">Ligase</keyword>
<keyword id="KW-0547">Nucleotide-binding</keyword>
<keyword id="KW-1185">Reference proteome</keyword>
<gene>
    <name evidence="1" type="primary">lplA</name>
    <name type="ordered locus">AHA_2967</name>
</gene>
<dbReference type="EC" id="6.3.1.20" evidence="1"/>
<dbReference type="EMBL" id="CP000462">
    <property type="protein sequence ID" value="ABK36395.1"/>
    <property type="molecule type" value="Genomic_DNA"/>
</dbReference>
<dbReference type="RefSeq" id="WP_011706765.1">
    <property type="nucleotide sequence ID" value="NC_008570.1"/>
</dbReference>
<dbReference type="RefSeq" id="YP_857471.1">
    <property type="nucleotide sequence ID" value="NC_008570.1"/>
</dbReference>
<dbReference type="SMR" id="A0KMH0"/>
<dbReference type="STRING" id="380703.AHA_2967"/>
<dbReference type="EnsemblBacteria" id="ABK36395">
    <property type="protein sequence ID" value="ABK36395"/>
    <property type="gene ID" value="AHA_2967"/>
</dbReference>
<dbReference type="GeneID" id="4489560"/>
<dbReference type="KEGG" id="aha:AHA_2967"/>
<dbReference type="PATRIC" id="fig|380703.7.peg.2964"/>
<dbReference type="eggNOG" id="COG0095">
    <property type="taxonomic scope" value="Bacteria"/>
</dbReference>
<dbReference type="HOGENOM" id="CLU_022986_0_1_6"/>
<dbReference type="OrthoDB" id="9787898at2"/>
<dbReference type="UniPathway" id="UPA00537">
    <property type="reaction ID" value="UER00594"/>
</dbReference>
<dbReference type="UniPathway" id="UPA00537">
    <property type="reaction ID" value="UER00595"/>
</dbReference>
<dbReference type="Proteomes" id="UP000000756">
    <property type="component" value="Chromosome"/>
</dbReference>
<dbReference type="GO" id="GO:0005829">
    <property type="term" value="C:cytosol"/>
    <property type="evidence" value="ECO:0007669"/>
    <property type="project" value="TreeGrafter"/>
</dbReference>
<dbReference type="GO" id="GO:0005524">
    <property type="term" value="F:ATP binding"/>
    <property type="evidence" value="ECO:0007669"/>
    <property type="project" value="UniProtKB-KW"/>
</dbReference>
<dbReference type="GO" id="GO:0016979">
    <property type="term" value="F:lipoate-protein ligase activity"/>
    <property type="evidence" value="ECO:0007669"/>
    <property type="project" value="UniProtKB-UniRule"/>
</dbReference>
<dbReference type="GO" id="GO:0017118">
    <property type="term" value="F:lipoyltransferase activity"/>
    <property type="evidence" value="ECO:0007669"/>
    <property type="project" value="TreeGrafter"/>
</dbReference>
<dbReference type="GO" id="GO:0036211">
    <property type="term" value="P:protein modification process"/>
    <property type="evidence" value="ECO:0007669"/>
    <property type="project" value="InterPro"/>
</dbReference>
<dbReference type="CDD" id="cd16443">
    <property type="entry name" value="LplA"/>
    <property type="match status" value="1"/>
</dbReference>
<dbReference type="FunFam" id="3.30.930.10:FF:000024">
    <property type="entry name" value="Lipoate-protein ligase A"/>
    <property type="match status" value="1"/>
</dbReference>
<dbReference type="Gene3D" id="3.30.930.10">
    <property type="entry name" value="Bira Bifunctional Protein, Domain 2"/>
    <property type="match status" value="1"/>
</dbReference>
<dbReference type="Gene3D" id="3.30.390.50">
    <property type="entry name" value="CO dehydrogenase flavoprotein, C-terminal domain"/>
    <property type="match status" value="1"/>
</dbReference>
<dbReference type="HAMAP" id="MF_01602">
    <property type="entry name" value="LplA"/>
    <property type="match status" value="1"/>
</dbReference>
<dbReference type="InterPro" id="IPR045864">
    <property type="entry name" value="aa-tRNA-synth_II/BPL/LPL"/>
</dbReference>
<dbReference type="InterPro" id="IPR004143">
    <property type="entry name" value="BPL_LPL_catalytic"/>
</dbReference>
<dbReference type="InterPro" id="IPR023741">
    <property type="entry name" value="Lipoate_ligase_A"/>
</dbReference>
<dbReference type="InterPro" id="IPR019491">
    <property type="entry name" value="Lipoate_protein_ligase_C"/>
</dbReference>
<dbReference type="InterPro" id="IPR004562">
    <property type="entry name" value="LipoylTrfase_LipoateP_Ligase"/>
</dbReference>
<dbReference type="NCBIfam" id="TIGR00545">
    <property type="entry name" value="lipoyltrans"/>
    <property type="match status" value="1"/>
</dbReference>
<dbReference type="PANTHER" id="PTHR12561">
    <property type="entry name" value="LIPOATE-PROTEIN LIGASE"/>
    <property type="match status" value="1"/>
</dbReference>
<dbReference type="PANTHER" id="PTHR12561:SF3">
    <property type="entry name" value="LIPOYLTRANSFERASE 1, MITOCHONDRIAL"/>
    <property type="match status" value="1"/>
</dbReference>
<dbReference type="Pfam" id="PF10437">
    <property type="entry name" value="Lip_prot_lig_C"/>
    <property type="match status" value="1"/>
</dbReference>
<dbReference type="Pfam" id="PF21948">
    <property type="entry name" value="LplA-B_cat"/>
    <property type="match status" value="1"/>
</dbReference>
<dbReference type="SUPFAM" id="SSF55681">
    <property type="entry name" value="Class II aaRS and biotin synthetases"/>
    <property type="match status" value="1"/>
</dbReference>
<dbReference type="SUPFAM" id="SSF82649">
    <property type="entry name" value="SufE/NifU"/>
    <property type="match status" value="1"/>
</dbReference>
<dbReference type="PROSITE" id="PS51733">
    <property type="entry name" value="BPL_LPL_CATALYTIC"/>
    <property type="match status" value="1"/>
</dbReference>
<comment type="function">
    <text evidence="1">Catalyzes both the ATP-dependent activation of exogenously supplied lipoate to lipoyl-AMP and the transfer of the activated lipoyl onto the lipoyl domains of lipoate-dependent enzymes.</text>
</comment>
<comment type="catalytic activity">
    <reaction evidence="1">
        <text>L-lysyl-[lipoyl-carrier protein] + (R)-lipoate + ATP = N(6)-[(R)-lipoyl]-L-lysyl-[lipoyl-carrier protein] + AMP + diphosphate + H(+)</text>
        <dbReference type="Rhea" id="RHEA:49288"/>
        <dbReference type="Rhea" id="RHEA-COMP:10500"/>
        <dbReference type="Rhea" id="RHEA-COMP:10502"/>
        <dbReference type="ChEBI" id="CHEBI:15378"/>
        <dbReference type="ChEBI" id="CHEBI:29969"/>
        <dbReference type="ChEBI" id="CHEBI:30616"/>
        <dbReference type="ChEBI" id="CHEBI:33019"/>
        <dbReference type="ChEBI" id="CHEBI:83088"/>
        <dbReference type="ChEBI" id="CHEBI:83099"/>
        <dbReference type="ChEBI" id="CHEBI:456215"/>
        <dbReference type="EC" id="6.3.1.20"/>
    </reaction>
</comment>
<comment type="pathway">
    <text evidence="1">Protein modification; protein lipoylation via exogenous pathway; protein N(6)-(lipoyl)lysine from lipoate: step 1/2.</text>
</comment>
<comment type="pathway">
    <text evidence="1">Protein modification; protein lipoylation via exogenous pathway; protein N(6)-(lipoyl)lysine from lipoate: step 2/2.</text>
</comment>
<comment type="subunit">
    <text evidence="1">Monomer.</text>
</comment>
<comment type="subcellular location">
    <subcellularLocation>
        <location evidence="1">Cytoplasm</location>
    </subcellularLocation>
</comment>
<comment type="miscellaneous">
    <text evidence="1">In the transfer reaction, the free carboxyl group of lipoic acid is attached via an amide linkage to the epsilon-amino group of a specific lysine residue of lipoyl domains of lipoate-dependent enzymes.</text>
</comment>
<comment type="similarity">
    <text evidence="1">Belongs to the LplA family.</text>
</comment>
<feature type="chain" id="PRO_1000069374" description="Lipoate-protein ligase A">
    <location>
        <begin position="1"/>
        <end position="338"/>
    </location>
</feature>
<feature type="domain" description="BPL/LPL catalytic" evidence="2">
    <location>
        <begin position="29"/>
        <end position="216"/>
    </location>
</feature>
<feature type="binding site" evidence="1">
    <location>
        <position position="71"/>
    </location>
    <ligand>
        <name>ATP</name>
        <dbReference type="ChEBI" id="CHEBI:30616"/>
    </ligand>
</feature>
<feature type="binding site" evidence="1">
    <location>
        <begin position="76"/>
        <end position="79"/>
    </location>
    <ligand>
        <name>ATP</name>
        <dbReference type="ChEBI" id="CHEBI:30616"/>
    </ligand>
</feature>
<feature type="binding site" evidence="1">
    <location>
        <position position="134"/>
    </location>
    <ligand>
        <name>(R)-lipoate</name>
        <dbReference type="ChEBI" id="CHEBI:83088"/>
    </ligand>
</feature>
<feature type="binding site" evidence="1">
    <location>
        <position position="134"/>
    </location>
    <ligand>
        <name>ATP</name>
        <dbReference type="ChEBI" id="CHEBI:30616"/>
    </ligand>
</feature>
<sequence>MSRLRLLLSDSHDPLFNLAVEECIFRQMDPNQRVLFLWRNANTVVIGRAQNPWKECNTRRMEEDGVTLARRSSGGGAVFHDLGNSCFTFMAGKPEYDKSVSTAIVLDALTRLGVEAFASGRNDLLVATPDGERKVSGSAYRETHDRGFHHGTLLLDADLGRLANYLNPDPKKLAAKGISSVRSRVANLCELLPGIDHPQVSEALQEAFFSHYGERVQPEHISPEQMPDLPGFAETFARQRSWEWNFGHAPAFSHQLDERFGWGGVELHFDVEKGVIGRAQIFSDSLDPAPLDALAARLPGTAYRADALYDLLRQWRSEFAAREAELEELSRWLLAALR</sequence>
<name>LPLA_AERHH</name>
<protein>
    <recommendedName>
        <fullName evidence="1">Lipoate-protein ligase A</fullName>
        <ecNumber evidence="1">6.3.1.20</ecNumber>
    </recommendedName>
    <alternativeName>
        <fullName evidence="1">Lipoate--protein ligase</fullName>
    </alternativeName>
</protein>
<accession>A0KMH0</accession>
<evidence type="ECO:0000255" key="1">
    <source>
        <dbReference type="HAMAP-Rule" id="MF_01602"/>
    </source>
</evidence>
<evidence type="ECO:0000255" key="2">
    <source>
        <dbReference type="PROSITE-ProRule" id="PRU01067"/>
    </source>
</evidence>
<reference key="1">
    <citation type="journal article" date="2006" name="J. Bacteriol.">
        <title>Genome sequence of Aeromonas hydrophila ATCC 7966T: jack of all trades.</title>
        <authorList>
            <person name="Seshadri R."/>
            <person name="Joseph S.W."/>
            <person name="Chopra A.K."/>
            <person name="Sha J."/>
            <person name="Shaw J."/>
            <person name="Graf J."/>
            <person name="Haft D.H."/>
            <person name="Wu M."/>
            <person name="Ren Q."/>
            <person name="Rosovitz M.J."/>
            <person name="Madupu R."/>
            <person name="Tallon L."/>
            <person name="Kim M."/>
            <person name="Jin S."/>
            <person name="Vuong H."/>
            <person name="Stine O.C."/>
            <person name="Ali A."/>
            <person name="Horneman A.J."/>
            <person name="Heidelberg J.F."/>
        </authorList>
    </citation>
    <scope>NUCLEOTIDE SEQUENCE [LARGE SCALE GENOMIC DNA]</scope>
    <source>
        <strain>ATCC 7966 / DSM 30187 / BCRC 13018 / CCUG 14551 / JCM 1027 / KCTC 2358 / NCIMB 9240 / NCTC 8049</strain>
    </source>
</reference>
<organism>
    <name type="scientific">Aeromonas hydrophila subsp. hydrophila (strain ATCC 7966 / DSM 30187 / BCRC 13018 / CCUG 14551 / JCM 1027 / KCTC 2358 / NCIMB 9240 / NCTC 8049)</name>
    <dbReference type="NCBI Taxonomy" id="380703"/>
    <lineage>
        <taxon>Bacteria</taxon>
        <taxon>Pseudomonadati</taxon>
        <taxon>Pseudomonadota</taxon>
        <taxon>Gammaproteobacteria</taxon>
        <taxon>Aeromonadales</taxon>
        <taxon>Aeromonadaceae</taxon>
        <taxon>Aeromonas</taxon>
    </lineage>
</organism>
<proteinExistence type="inferred from homology"/>